<protein>
    <recommendedName>
        <fullName evidence="1">Protein-methionine-sulfoxide reductase heme-binding subunit MsrQ</fullName>
    </recommendedName>
    <alternativeName>
        <fullName evidence="1">Flavocytochrome MsrQ</fullName>
    </alternativeName>
</protein>
<sequence>MRSLPALPKRLHGPSIWALYILGFLPAVWGFYLGATGRLPGNAVKEFEHLLGIWALRFLIATLAITPIRDLFGVNWLRYRRALGLLAFYYVMMHFLTYMVLDQTLLLPAIVADIARRPFITIGMAALVLLIPLAVTSNIWSIRRLGQRWNKLHRLVYVIAAAGALHFAMSVKVVGPEQMLYLFLVAVLVAWRAVRKRFLRWRRQGTAPMRSQARAG</sequence>
<evidence type="ECO:0000255" key="1">
    <source>
        <dbReference type="HAMAP-Rule" id="MF_01207"/>
    </source>
</evidence>
<feature type="chain" id="PRO_0000091582" description="Protein-methionine-sulfoxide reductase heme-binding subunit MsrQ">
    <location>
        <begin position="1"/>
        <end position="216"/>
    </location>
</feature>
<feature type="transmembrane region" description="Helical" evidence="1">
    <location>
        <begin position="16"/>
        <end position="36"/>
    </location>
</feature>
<feature type="transmembrane region" description="Helical" evidence="1">
    <location>
        <begin position="48"/>
        <end position="68"/>
    </location>
</feature>
<feature type="transmembrane region" description="Helical" evidence="1">
    <location>
        <begin position="82"/>
        <end position="102"/>
    </location>
</feature>
<feature type="transmembrane region" description="Helical" evidence="1">
    <location>
        <begin position="119"/>
        <end position="139"/>
    </location>
</feature>
<feature type="transmembrane region" description="Helical" evidence="1">
    <location>
        <begin position="155"/>
        <end position="175"/>
    </location>
</feature>
<dbReference type="EMBL" id="AL591688">
    <property type="protein sequence ID" value="CAC45961.1"/>
    <property type="molecule type" value="Genomic_DNA"/>
</dbReference>
<dbReference type="RefSeq" id="NP_385488.1">
    <property type="nucleotide sequence ID" value="NC_003047.1"/>
</dbReference>
<dbReference type="RefSeq" id="WP_010969198.1">
    <property type="nucleotide sequence ID" value="NC_003047.1"/>
</dbReference>
<dbReference type="SMR" id="Q92QE8"/>
<dbReference type="EnsemblBacteria" id="CAC45961">
    <property type="protein sequence ID" value="CAC45961"/>
    <property type="gene ID" value="SMc01282"/>
</dbReference>
<dbReference type="KEGG" id="sme:SMc01282"/>
<dbReference type="PATRIC" id="fig|266834.11.peg.2799"/>
<dbReference type="eggNOG" id="COG2717">
    <property type="taxonomic scope" value="Bacteria"/>
</dbReference>
<dbReference type="HOGENOM" id="CLU_080662_2_0_5"/>
<dbReference type="OrthoDB" id="9788328at2"/>
<dbReference type="Proteomes" id="UP000001976">
    <property type="component" value="Chromosome"/>
</dbReference>
<dbReference type="GO" id="GO:0005886">
    <property type="term" value="C:plasma membrane"/>
    <property type="evidence" value="ECO:0007669"/>
    <property type="project" value="UniProtKB-SubCell"/>
</dbReference>
<dbReference type="GO" id="GO:0009055">
    <property type="term" value="F:electron transfer activity"/>
    <property type="evidence" value="ECO:0007669"/>
    <property type="project" value="UniProtKB-UniRule"/>
</dbReference>
<dbReference type="GO" id="GO:0010181">
    <property type="term" value="F:FMN binding"/>
    <property type="evidence" value="ECO:0007669"/>
    <property type="project" value="UniProtKB-UniRule"/>
</dbReference>
<dbReference type="GO" id="GO:0020037">
    <property type="term" value="F:heme binding"/>
    <property type="evidence" value="ECO:0007669"/>
    <property type="project" value="UniProtKB-UniRule"/>
</dbReference>
<dbReference type="GO" id="GO:0046872">
    <property type="term" value="F:metal ion binding"/>
    <property type="evidence" value="ECO:0007669"/>
    <property type="project" value="UniProtKB-KW"/>
</dbReference>
<dbReference type="GO" id="GO:0016679">
    <property type="term" value="F:oxidoreductase activity, acting on diphenols and related substances as donors"/>
    <property type="evidence" value="ECO:0007669"/>
    <property type="project" value="TreeGrafter"/>
</dbReference>
<dbReference type="GO" id="GO:0030091">
    <property type="term" value="P:protein repair"/>
    <property type="evidence" value="ECO:0007669"/>
    <property type="project" value="UniProtKB-UniRule"/>
</dbReference>
<dbReference type="HAMAP" id="MF_01207">
    <property type="entry name" value="MsrQ"/>
    <property type="match status" value="1"/>
</dbReference>
<dbReference type="InterPro" id="IPR013130">
    <property type="entry name" value="Fe3_Rdtase_TM_dom"/>
</dbReference>
<dbReference type="InterPro" id="IPR022837">
    <property type="entry name" value="MsrQ-like"/>
</dbReference>
<dbReference type="NCBIfam" id="NF003833">
    <property type="entry name" value="PRK05419.1-5"/>
    <property type="match status" value="1"/>
</dbReference>
<dbReference type="PANTHER" id="PTHR36964">
    <property type="entry name" value="PROTEIN-METHIONINE-SULFOXIDE REDUCTASE HEME-BINDING SUBUNIT MSRQ"/>
    <property type="match status" value="1"/>
</dbReference>
<dbReference type="PANTHER" id="PTHR36964:SF1">
    <property type="entry name" value="PROTEIN-METHIONINE-SULFOXIDE REDUCTASE HEME-BINDING SUBUNIT MSRQ"/>
    <property type="match status" value="1"/>
</dbReference>
<dbReference type="Pfam" id="PF01794">
    <property type="entry name" value="Ferric_reduct"/>
    <property type="match status" value="1"/>
</dbReference>
<reference key="1">
    <citation type="journal article" date="2001" name="Proc. Natl. Acad. Sci. U.S.A.">
        <title>Analysis of the chromosome sequence of the legume symbiont Sinorhizobium meliloti strain 1021.</title>
        <authorList>
            <person name="Capela D."/>
            <person name="Barloy-Hubler F."/>
            <person name="Gouzy J."/>
            <person name="Bothe G."/>
            <person name="Ampe F."/>
            <person name="Batut J."/>
            <person name="Boistard P."/>
            <person name="Becker A."/>
            <person name="Boutry M."/>
            <person name="Cadieu E."/>
            <person name="Dreano S."/>
            <person name="Gloux S."/>
            <person name="Godrie T."/>
            <person name="Goffeau A."/>
            <person name="Kahn D."/>
            <person name="Kiss E."/>
            <person name="Lelaure V."/>
            <person name="Masuy D."/>
            <person name="Pohl T."/>
            <person name="Portetelle D."/>
            <person name="Puehler A."/>
            <person name="Purnelle B."/>
            <person name="Ramsperger U."/>
            <person name="Renard C."/>
            <person name="Thebault P."/>
            <person name="Vandenbol M."/>
            <person name="Weidner S."/>
            <person name="Galibert F."/>
        </authorList>
    </citation>
    <scope>NUCLEOTIDE SEQUENCE [LARGE SCALE GENOMIC DNA]</scope>
    <source>
        <strain>1021</strain>
    </source>
</reference>
<reference key="2">
    <citation type="journal article" date="2001" name="Science">
        <title>The composite genome of the legume symbiont Sinorhizobium meliloti.</title>
        <authorList>
            <person name="Galibert F."/>
            <person name="Finan T.M."/>
            <person name="Long S.R."/>
            <person name="Puehler A."/>
            <person name="Abola P."/>
            <person name="Ampe F."/>
            <person name="Barloy-Hubler F."/>
            <person name="Barnett M.J."/>
            <person name="Becker A."/>
            <person name="Boistard P."/>
            <person name="Bothe G."/>
            <person name="Boutry M."/>
            <person name="Bowser L."/>
            <person name="Buhrmester J."/>
            <person name="Cadieu E."/>
            <person name="Capela D."/>
            <person name="Chain P."/>
            <person name="Cowie A."/>
            <person name="Davis R.W."/>
            <person name="Dreano S."/>
            <person name="Federspiel N.A."/>
            <person name="Fisher R.F."/>
            <person name="Gloux S."/>
            <person name="Godrie T."/>
            <person name="Goffeau A."/>
            <person name="Golding B."/>
            <person name="Gouzy J."/>
            <person name="Gurjal M."/>
            <person name="Hernandez-Lucas I."/>
            <person name="Hong A."/>
            <person name="Huizar L."/>
            <person name="Hyman R.W."/>
            <person name="Jones T."/>
            <person name="Kahn D."/>
            <person name="Kahn M.L."/>
            <person name="Kalman S."/>
            <person name="Keating D.H."/>
            <person name="Kiss E."/>
            <person name="Komp C."/>
            <person name="Lelaure V."/>
            <person name="Masuy D."/>
            <person name="Palm C."/>
            <person name="Peck M.C."/>
            <person name="Pohl T.M."/>
            <person name="Portetelle D."/>
            <person name="Purnelle B."/>
            <person name="Ramsperger U."/>
            <person name="Surzycki R."/>
            <person name="Thebault P."/>
            <person name="Vandenbol M."/>
            <person name="Vorhoelter F.J."/>
            <person name="Weidner S."/>
            <person name="Wells D.H."/>
            <person name="Wong K."/>
            <person name="Yeh K.-C."/>
            <person name="Batut J."/>
        </authorList>
    </citation>
    <scope>NUCLEOTIDE SEQUENCE [LARGE SCALE GENOMIC DNA]</scope>
    <source>
        <strain>1021</strain>
    </source>
</reference>
<proteinExistence type="inferred from homology"/>
<gene>
    <name evidence="1" type="primary">msrQ</name>
    <name type="ordered locus">R01382</name>
    <name type="ORF">SMc01282</name>
</gene>
<accession>Q92QE8</accession>
<organism>
    <name type="scientific">Rhizobium meliloti (strain 1021)</name>
    <name type="common">Ensifer meliloti</name>
    <name type="synonym">Sinorhizobium meliloti</name>
    <dbReference type="NCBI Taxonomy" id="266834"/>
    <lineage>
        <taxon>Bacteria</taxon>
        <taxon>Pseudomonadati</taxon>
        <taxon>Pseudomonadota</taxon>
        <taxon>Alphaproteobacteria</taxon>
        <taxon>Hyphomicrobiales</taxon>
        <taxon>Rhizobiaceae</taxon>
        <taxon>Sinorhizobium/Ensifer group</taxon>
        <taxon>Sinorhizobium</taxon>
    </lineage>
</organism>
<comment type="function">
    <text evidence="1">Part of the MsrPQ system that repairs oxidized periplasmic proteins containing methionine sulfoxide residues (Met-O), using respiratory chain electrons. Thus protects these proteins from oxidative-stress damage caused by reactive species of oxygen and chlorine generated by the host defense mechanisms. MsrPQ is essential for the maintenance of envelope integrity under bleach stress, rescuing a wide series of structurally unrelated periplasmic proteins from methionine oxidation. MsrQ provides electrons for reduction to the reductase catalytic subunit MsrP, using the quinone pool of the respiratory chain.</text>
</comment>
<comment type="cofactor">
    <cofactor evidence="1">
        <name>FMN</name>
        <dbReference type="ChEBI" id="CHEBI:58210"/>
    </cofactor>
    <text evidence="1">Binds 1 FMN per subunit.</text>
</comment>
<comment type="cofactor">
    <cofactor evidence="1">
        <name>heme b</name>
        <dbReference type="ChEBI" id="CHEBI:60344"/>
    </cofactor>
    <text evidence="1">Binds 1 heme b (iron(II)-protoporphyrin IX) group per subunit.</text>
</comment>
<comment type="subunit">
    <text evidence="1">Heterodimer of a catalytic subunit (MsrP) and a heme-binding subunit (MsrQ).</text>
</comment>
<comment type="subcellular location">
    <subcellularLocation>
        <location evidence="1">Cell inner membrane</location>
        <topology evidence="1">Multi-pass membrane protein</topology>
    </subcellularLocation>
</comment>
<comment type="similarity">
    <text evidence="1">Belongs to the MsrQ family.</text>
</comment>
<keyword id="KW-0997">Cell inner membrane</keyword>
<keyword id="KW-1003">Cell membrane</keyword>
<keyword id="KW-0249">Electron transport</keyword>
<keyword id="KW-0285">Flavoprotein</keyword>
<keyword id="KW-0288">FMN</keyword>
<keyword id="KW-0349">Heme</keyword>
<keyword id="KW-0408">Iron</keyword>
<keyword id="KW-0472">Membrane</keyword>
<keyword id="KW-0479">Metal-binding</keyword>
<keyword id="KW-1185">Reference proteome</keyword>
<keyword id="KW-0812">Transmembrane</keyword>
<keyword id="KW-1133">Transmembrane helix</keyword>
<keyword id="KW-0813">Transport</keyword>
<name>MSRQ_RHIME</name>